<proteinExistence type="inferred from homology"/>
<accession>A4WWQ0</accession>
<protein>
    <recommendedName>
        <fullName evidence="1">Bifunctional purine biosynthesis protein PurH</fullName>
    </recommendedName>
    <domain>
        <recommendedName>
            <fullName evidence="1">Phosphoribosylaminoimidazolecarboxamide formyltransferase</fullName>
            <ecNumber evidence="1">2.1.2.3</ecNumber>
        </recommendedName>
        <alternativeName>
            <fullName evidence="1">AICAR transformylase</fullName>
        </alternativeName>
    </domain>
    <domain>
        <recommendedName>
            <fullName evidence="1">IMP cyclohydrolase</fullName>
            <ecNumber evidence="1">3.5.4.10</ecNumber>
        </recommendedName>
        <alternativeName>
            <fullName evidence="1">ATIC</fullName>
        </alternativeName>
        <alternativeName>
            <fullName evidence="1">IMP synthase</fullName>
        </alternativeName>
        <alternativeName>
            <fullName evidence="1">Inosinicase</fullName>
        </alternativeName>
    </domain>
</protein>
<keyword id="KW-0378">Hydrolase</keyword>
<keyword id="KW-0511">Multifunctional enzyme</keyword>
<keyword id="KW-0658">Purine biosynthesis</keyword>
<keyword id="KW-0808">Transferase</keyword>
<evidence type="ECO:0000255" key="1">
    <source>
        <dbReference type="HAMAP-Rule" id="MF_00139"/>
    </source>
</evidence>
<evidence type="ECO:0000255" key="2">
    <source>
        <dbReference type="PROSITE-ProRule" id="PRU01202"/>
    </source>
</evidence>
<sequence length="529" mass="55856">MTNLVPVGRALLSVSDKSGLLDLARALAELEVELISTGGTAATLRAAGLKVRDVAEVTGFPEMMDGRVKTLHPMVHGGLLALRDDDEHLVAMAAHGIEPIDLLVVNLYPFEAAVARGASYDDCIENIDIGGPAMIRAAAKNHRFVNVVTDTADYKALLDELRAHDGATTLAFRQKLALTAYSRTAAYDAAVSAWMAGALKSEAPRRRTFAGTLAQTMRYGENPHQKAAFYTDGSHRPGVATAKQWQGKELSYNNINDTDAAFELVAEFDPSEGPACVIVKHANPCGVARGATLAEAYGRAFDCDRVSAFGGIIALNQPLDAATAEKITEIFTEVVIAPGADEEARAIFAAKKNLRLLTTEALPDPLAPGLAFKQVAGGFLVQDRDAGHVDALDLKVVTKRAPSDAELADLLFAWTVAKHVKSNAIVYVKDGATVGVGAGQMSRVDSTRIAARKSQDMAQALGLAQPLTQGSVVASDAFFPFADGLLAAAEAGATAIIQPGGSMRDDEVIAAADEAGLAMVFTGQRHFRH</sequence>
<organism>
    <name type="scientific">Cereibacter sphaeroides (strain ATCC 17025 / ATH 2.4.3)</name>
    <name type="common">Rhodobacter sphaeroides</name>
    <dbReference type="NCBI Taxonomy" id="349102"/>
    <lineage>
        <taxon>Bacteria</taxon>
        <taxon>Pseudomonadati</taxon>
        <taxon>Pseudomonadota</taxon>
        <taxon>Alphaproteobacteria</taxon>
        <taxon>Rhodobacterales</taxon>
        <taxon>Paracoccaceae</taxon>
        <taxon>Cereibacter</taxon>
    </lineage>
</organism>
<reference key="1">
    <citation type="submission" date="2007-04" db="EMBL/GenBank/DDBJ databases">
        <title>Complete sequence of chromosome of Rhodobacter sphaeroides ATCC 17025.</title>
        <authorList>
            <consortium name="US DOE Joint Genome Institute"/>
            <person name="Copeland A."/>
            <person name="Lucas S."/>
            <person name="Lapidus A."/>
            <person name="Barry K."/>
            <person name="Detter J.C."/>
            <person name="Glavina del Rio T."/>
            <person name="Hammon N."/>
            <person name="Israni S."/>
            <person name="Dalin E."/>
            <person name="Tice H."/>
            <person name="Pitluck S."/>
            <person name="Chertkov O."/>
            <person name="Brettin T."/>
            <person name="Bruce D."/>
            <person name="Han C."/>
            <person name="Schmutz J."/>
            <person name="Larimer F."/>
            <person name="Land M."/>
            <person name="Hauser L."/>
            <person name="Kyrpides N."/>
            <person name="Kim E."/>
            <person name="Richardson P."/>
            <person name="Mackenzie C."/>
            <person name="Choudhary M."/>
            <person name="Donohue T.J."/>
            <person name="Kaplan S."/>
        </authorList>
    </citation>
    <scope>NUCLEOTIDE SEQUENCE [LARGE SCALE GENOMIC DNA]</scope>
    <source>
        <strain>ATCC 17025 / ATH 2.4.3</strain>
    </source>
</reference>
<comment type="catalytic activity">
    <reaction evidence="1">
        <text>(6R)-10-formyltetrahydrofolate + 5-amino-1-(5-phospho-beta-D-ribosyl)imidazole-4-carboxamide = 5-formamido-1-(5-phospho-D-ribosyl)imidazole-4-carboxamide + (6S)-5,6,7,8-tetrahydrofolate</text>
        <dbReference type="Rhea" id="RHEA:22192"/>
        <dbReference type="ChEBI" id="CHEBI:57453"/>
        <dbReference type="ChEBI" id="CHEBI:58467"/>
        <dbReference type="ChEBI" id="CHEBI:58475"/>
        <dbReference type="ChEBI" id="CHEBI:195366"/>
        <dbReference type="EC" id="2.1.2.3"/>
    </reaction>
</comment>
<comment type="catalytic activity">
    <reaction evidence="1">
        <text>IMP + H2O = 5-formamido-1-(5-phospho-D-ribosyl)imidazole-4-carboxamide</text>
        <dbReference type="Rhea" id="RHEA:18445"/>
        <dbReference type="ChEBI" id="CHEBI:15377"/>
        <dbReference type="ChEBI" id="CHEBI:58053"/>
        <dbReference type="ChEBI" id="CHEBI:58467"/>
        <dbReference type="EC" id="3.5.4.10"/>
    </reaction>
</comment>
<comment type="pathway">
    <text evidence="1">Purine metabolism; IMP biosynthesis via de novo pathway; 5-formamido-1-(5-phospho-D-ribosyl)imidazole-4-carboxamide from 5-amino-1-(5-phospho-D-ribosyl)imidazole-4-carboxamide (10-formyl THF route): step 1/1.</text>
</comment>
<comment type="pathway">
    <text evidence="1">Purine metabolism; IMP biosynthesis via de novo pathway; IMP from 5-formamido-1-(5-phospho-D-ribosyl)imidazole-4-carboxamide: step 1/1.</text>
</comment>
<comment type="domain">
    <text evidence="1">The IMP cyclohydrolase activity resides in the N-terminal region.</text>
</comment>
<comment type="similarity">
    <text evidence="1">Belongs to the PurH family.</text>
</comment>
<dbReference type="EC" id="2.1.2.3" evidence="1"/>
<dbReference type="EC" id="3.5.4.10" evidence="1"/>
<dbReference type="EMBL" id="CP000661">
    <property type="protein sequence ID" value="ABP71814.1"/>
    <property type="molecule type" value="Genomic_DNA"/>
</dbReference>
<dbReference type="SMR" id="A4WWQ0"/>
<dbReference type="STRING" id="349102.Rsph17025_2928"/>
<dbReference type="KEGG" id="rsq:Rsph17025_2928"/>
<dbReference type="eggNOG" id="COG0138">
    <property type="taxonomic scope" value="Bacteria"/>
</dbReference>
<dbReference type="HOGENOM" id="CLU_016316_5_2_5"/>
<dbReference type="BioCyc" id="RSPH349102:G1G8M-3025-MONOMER"/>
<dbReference type="UniPathway" id="UPA00074">
    <property type="reaction ID" value="UER00133"/>
</dbReference>
<dbReference type="UniPathway" id="UPA00074">
    <property type="reaction ID" value="UER00135"/>
</dbReference>
<dbReference type="GO" id="GO:0005829">
    <property type="term" value="C:cytosol"/>
    <property type="evidence" value="ECO:0007669"/>
    <property type="project" value="TreeGrafter"/>
</dbReference>
<dbReference type="GO" id="GO:0003937">
    <property type="term" value="F:IMP cyclohydrolase activity"/>
    <property type="evidence" value="ECO:0007669"/>
    <property type="project" value="UniProtKB-UniRule"/>
</dbReference>
<dbReference type="GO" id="GO:0004643">
    <property type="term" value="F:phosphoribosylaminoimidazolecarboxamide formyltransferase activity"/>
    <property type="evidence" value="ECO:0007669"/>
    <property type="project" value="UniProtKB-UniRule"/>
</dbReference>
<dbReference type="GO" id="GO:0006189">
    <property type="term" value="P:'de novo' IMP biosynthetic process"/>
    <property type="evidence" value="ECO:0007669"/>
    <property type="project" value="UniProtKB-UniRule"/>
</dbReference>
<dbReference type="CDD" id="cd01421">
    <property type="entry name" value="IMPCH"/>
    <property type="match status" value="1"/>
</dbReference>
<dbReference type="FunFam" id="3.40.140.20:FF:000001">
    <property type="entry name" value="Bifunctional purine biosynthesis protein PurH"/>
    <property type="match status" value="1"/>
</dbReference>
<dbReference type="FunFam" id="3.40.140.20:FF:000002">
    <property type="entry name" value="Bifunctional purine biosynthesis protein PurH"/>
    <property type="match status" value="1"/>
</dbReference>
<dbReference type="FunFam" id="3.40.50.1380:FF:000001">
    <property type="entry name" value="Bifunctional purine biosynthesis protein PurH"/>
    <property type="match status" value="1"/>
</dbReference>
<dbReference type="Gene3D" id="3.40.140.20">
    <property type="match status" value="2"/>
</dbReference>
<dbReference type="Gene3D" id="3.40.50.1380">
    <property type="entry name" value="Methylglyoxal synthase-like domain"/>
    <property type="match status" value="1"/>
</dbReference>
<dbReference type="HAMAP" id="MF_00139">
    <property type="entry name" value="PurH"/>
    <property type="match status" value="1"/>
</dbReference>
<dbReference type="InterPro" id="IPR024051">
    <property type="entry name" value="AICAR_Tfase_dup_dom_sf"/>
</dbReference>
<dbReference type="InterPro" id="IPR016193">
    <property type="entry name" value="Cytidine_deaminase-like"/>
</dbReference>
<dbReference type="InterPro" id="IPR011607">
    <property type="entry name" value="MGS-like_dom"/>
</dbReference>
<dbReference type="InterPro" id="IPR036914">
    <property type="entry name" value="MGS-like_dom_sf"/>
</dbReference>
<dbReference type="InterPro" id="IPR002695">
    <property type="entry name" value="PurH-like"/>
</dbReference>
<dbReference type="NCBIfam" id="NF002049">
    <property type="entry name" value="PRK00881.1"/>
    <property type="match status" value="1"/>
</dbReference>
<dbReference type="NCBIfam" id="TIGR00355">
    <property type="entry name" value="purH"/>
    <property type="match status" value="1"/>
</dbReference>
<dbReference type="PANTHER" id="PTHR11692:SF0">
    <property type="entry name" value="BIFUNCTIONAL PURINE BIOSYNTHESIS PROTEIN ATIC"/>
    <property type="match status" value="1"/>
</dbReference>
<dbReference type="PANTHER" id="PTHR11692">
    <property type="entry name" value="BIFUNCTIONAL PURINE BIOSYNTHESIS PROTEIN PURH"/>
    <property type="match status" value="1"/>
</dbReference>
<dbReference type="Pfam" id="PF01808">
    <property type="entry name" value="AICARFT_IMPCHas"/>
    <property type="match status" value="1"/>
</dbReference>
<dbReference type="Pfam" id="PF02142">
    <property type="entry name" value="MGS"/>
    <property type="match status" value="1"/>
</dbReference>
<dbReference type="PIRSF" id="PIRSF000414">
    <property type="entry name" value="AICARFT_IMPCHas"/>
    <property type="match status" value="1"/>
</dbReference>
<dbReference type="SMART" id="SM00798">
    <property type="entry name" value="AICARFT_IMPCHas"/>
    <property type="match status" value="1"/>
</dbReference>
<dbReference type="SMART" id="SM00851">
    <property type="entry name" value="MGS"/>
    <property type="match status" value="1"/>
</dbReference>
<dbReference type="SUPFAM" id="SSF53927">
    <property type="entry name" value="Cytidine deaminase-like"/>
    <property type="match status" value="1"/>
</dbReference>
<dbReference type="SUPFAM" id="SSF52335">
    <property type="entry name" value="Methylglyoxal synthase-like"/>
    <property type="match status" value="1"/>
</dbReference>
<dbReference type="PROSITE" id="PS51855">
    <property type="entry name" value="MGS"/>
    <property type="match status" value="1"/>
</dbReference>
<name>PUR9_CERS5</name>
<gene>
    <name evidence="1" type="primary">purH</name>
    <name type="ordered locus">Rsph17025_2928</name>
</gene>
<feature type="chain" id="PRO_1000057911" description="Bifunctional purine biosynthesis protein PurH">
    <location>
        <begin position="1"/>
        <end position="529"/>
    </location>
</feature>
<feature type="domain" description="MGS-like" evidence="2">
    <location>
        <begin position="2"/>
        <end position="149"/>
    </location>
</feature>